<keyword id="KW-0694">RNA-binding</keyword>
<keyword id="KW-0804">Transcription</keyword>
<keyword id="KW-0889">Transcription antitermination</keyword>
<keyword id="KW-0805">Transcription regulation</keyword>
<accession>A7H4Z5</accession>
<feature type="chain" id="PRO_1000023723" description="Transcription antitermination protein NusB">
    <location>
        <begin position="1"/>
        <end position="132"/>
    </location>
</feature>
<organism>
    <name type="scientific">Campylobacter jejuni subsp. doylei (strain ATCC BAA-1458 / RM4099 / 269.97)</name>
    <dbReference type="NCBI Taxonomy" id="360109"/>
    <lineage>
        <taxon>Bacteria</taxon>
        <taxon>Pseudomonadati</taxon>
        <taxon>Campylobacterota</taxon>
        <taxon>Epsilonproteobacteria</taxon>
        <taxon>Campylobacterales</taxon>
        <taxon>Campylobacteraceae</taxon>
        <taxon>Campylobacter</taxon>
    </lineage>
</organism>
<sequence length="132" mass="14970">MATRHQVRQSVISLLYAFELNSQNNVFVDEILDEKKIRNEQKNFTLNLYHGILDNLNNIDETLNSFLNDNQITALGHVERAILRLGAYELLFTNTPSAIVINEAIELAKELANDNSPKFMNGVLDALIKAKK</sequence>
<comment type="function">
    <text evidence="1">Involved in transcription antitermination. Required for transcription of ribosomal RNA (rRNA) genes. Binds specifically to the boxA antiterminator sequence of the ribosomal RNA (rrn) operons.</text>
</comment>
<comment type="similarity">
    <text evidence="1">Belongs to the NusB family.</text>
</comment>
<dbReference type="EMBL" id="CP000768">
    <property type="protein sequence ID" value="ABS44560.1"/>
    <property type="molecule type" value="Genomic_DNA"/>
</dbReference>
<dbReference type="SMR" id="A7H4Z5"/>
<dbReference type="KEGG" id="cjd:JJD26997_1576"/>
<dbReference type="HOGENOM" id="CLU_087843_3_3_7"/>
<dbReference type="Proteomes" id="UP000002302">
    <property type="component" value="Chromosome"/>
</dbReference>
<dbReference type="GO" id="GO:0005829">
    <property type="term" value="C:cytosol"/>
    <property type="evidence" value="ECO:0007669"/>
    <property type="project" value="TreeGrafter"/>
</dbReference>
<dbReference type="GO" id="GO:0003723">
    <property type="term" value="F:RNA binding"/>
    <property type="evidence" value="ECO:0007669"/>
    <property type="project" value="UniProtKB-UniRule"/>
</dbReference>
<dbReference type="GO" id="GO:0006353">
    <property type="term" value="P:DNA-templated transcription termination"/>
    <property type="evidence" value="ECO:0007669"/>
    <property type="project" value="UniProtKB-UniRule"/>
</dbReference>
<dbReference type="GO" id="GO:0031564">
    <property type="term" value="P:transcription antitermination"/>
    <property type="evidence" value="ECO:0007669"/>
    <property type="project" value="UniProtKB-KW"/>
</dbReference>
<dbReference type="Gene3D" id="1.10.940.10">
    <property type="entry name" value="NusB-like"/>
    <property type="match status" value="1"/>
</dbReference>
<dbReference type="HAMAP" id="MF_00073">
    <property type="entry name" value="NusB"/>
    <property type="match status" value="1"/>
</dbReference>
<dbReference type="InterPro" id="IPR035926">
    <property type="entry name" value="NusB-like_sf"/>
</dbReference>
<dbReference type="InterPro" id="IPR011605">
    <property type="entry name" value="NusB_fam"/>
</dbReference>
<dbReference type="InterPro" id="IPR006027">
    <property type="entry name" value="NusB_RsmB_TIM44"/>
</dbReference>
<dbReference type="NCBIfam" id="TIGR01951">
    <property type="entry name" value="nusB"/>
    <property type="match status" value="1"/>
</dbReference>
<dbReference type="PANTHER" id="PTHR11078:SF3">
    <property type="entry name" value="ANTITERMINATION NUSB DOMAIN-CONTAINING PROTEIN"/>
    <property type="match status" value="1"/>
</dbReference>
<dbReference type="PANTHER" id="PTHR11078">
    <property type="entry name" value="N UTILIZATION SUBSTANCE PROTEIN B-RELATED"/>
    <property type="match status" value="1"/>
</dbReference>
<dbReference type="Pfam" id="PF01029">
    <property type="entry name" value="NusB"/>
    <property type="match status" value="1"/>
</dbReference>
<dbReference type="SUPFAM" id="SSF48013">
    <property type="entry name" value="NusB-like"/>
    <property type="match status" value="1"/>
</dbReference>
<evidence type="ECO:0000255" key="1">
    <source>
        <dbReference type="HAMAP-Rule" id="MF_00073"/>
    </source>
</evidence>
<protein>
    <recommendedName>
        <fullName evidence="1">Transcription antitermination protein NusB</fullName>
    </recommendedName>
    <alternativeName>
        <fullName evidence="1">Antitermination factor NusB</fullName>
    </alternativeName>
</protein>
<name>NUSB_CAMJD</name>
<reference key="1">
    <citation type="submission" date="2007-07" db="EMBL/GenBank/DDBJ databases">
        <title>Complete genome sequence of Campylobacter jejuni subsp doylei 269.97 isolated from human blood.</title>
        <authorList>
            <person name="Fouts D.E."/>
            <person name="Mongodin E.F."/>
            <person name="Puiu D."/>
            <person name="Sebastian Y."/>
            <person name="Miller W.G."/>
            <person name="Mandrell R.E."/>
            <person name="Lastovica A.J."/>
            <person name="Nelson K.E."/>
        </authorList>
    </citation>
    <scope>NUCLEOTIDE SEQUENCE [LARGE SCALE GENOMIC DNA]</scope>
    <source>
        <strain>ATCC BAA-1458 / RM4099 / 269.97</strain>
    </source>
</reference>
<proteinExistence type="inferred from homology"/>
<gene>
    <name evidence="1" type="primary">nusB</name>
    <name type="ordered locus">JJD26997_1576</name>
</gene>